<feature type="chain" id="PRO_1000072381" description="Xylose isomerase">
    <location>
        <begin position="1"/>
        <end position="437"/>
    </location>
</feature>
<feature type="active site" evidence="1">
    <location>
        <position position="101"/>
    </location>
</feature>
<feature type="active site" evidence="1">
    <location>
        <position position="104"/>
    </location>
</feature>
<feature type="binding site" evidence="1">
    <location>
        <position position="232"/>
    </location>
    <ligand>
        <name>Mg(2+)</name>
        <dbReference type="ChEBI" id="CHEBI:18420"/>
        <label>1</label>
    </ligand>
</feature>
<feature type="binding site" evidence="1">
    <location>
        <position position="268"/>
    </location>
    <ligand>
        <name>Mg(2+)</name>
        <dbReference type="ChEBI" id="CHEBI:18420"/>
        <label>1</label>
    </ligand>
</feature>
<feature type="binding site" evidence="1">
    <location>
        <position position="268"/>
    </location>
    <ligand>
        <name>Mg(2+)</name>
        <dbReference type="ChEBI" id="CHEBI:18420"/>
        <label>2</label>
    </ligand>
</feature>
<feature type="binding site" evidence="1">
    <location>
        <position position="271"/>
    </location>
    <ligand>
        <name>Mg(2+)</name>
        <dbReference type="ChEBI" id="CHEBI:18420"/>
        <label>2</label>
    </ligand>
</feature>
<feature type="binding site" evidence="1">
    <location>
        <position position="296"/>
    </location>
    <ligand>
        <name>Mg(2+)</name>
        <dbReference type="ChEBI" id="CHEBI:18420"/>
        <label>1</label>
    </ligand>
</feature>
<feature type="binding site" evidence="1">
    <location>
        <position position="307"/>
    </location>
    <ligand>
        <name>Mg(2+)</name>
        <dbReference type="ChEBI" id="CHEBI:18420"/>
        <label>2</label>
    </ligand>
</feature>
<feature type="binding site" evidence="1">
    <location>
        <position position="309"/>
    </location>
    <ligand>
        <name>Mg(2+)</name>
        <dbReference type="ChEBI" id="CHEBI:18420"/>
        <label>2</label>
    </ligand>
</feature>
<feature type="binding site" evidence="1">
    <location>
        <position position="339"/>
    </location>
    <ligand>
        <name>Mg(2+)</name>
        <dbReference type="ChEBI" id="CHEBI:18420"/>
        <label>1</label>
    </ligand>
</feature>
<sequence length="437" mass="49266">MTNYFDKIEKVNYEGADSINPFAYKYYNANEVILGKTMADHLRLAVCYWHTFCWNGNDMFGVGSLDRSWQKQTDPLAGAKQKADIAFEFLTKLGVPYYCFHDVDIAPEGNSYQEYVNNFNTIVDVLEQKQAETGIKLLWGTANCFTNPRYMSGAATNPNPEIFARAGAQVFNAMNATKRLGGENYVLWGGREGYETLLNTDLRREREQIGRFMQMVVEHKHKIGFKGTLLIEPKPQEPTKHQYDYDVATVYGFLKQFGLEKEIKVNIEANHATLAGHTFQHEIATAAALDILGSIDANRGDPQLGWDTDQFPNSVEENTLAIYEILKAGGLTTGGLNFDAKIRRQSIDPYDLFHAHIGAIDVLALSLRRAAKMLEDQTLQHIVEQRYAGWNGELGQQILNGKSSLEALAQAAQHLEPQPVSGQQEYLENLVNSYIYR</sequence>
<protein>
    <recommendedName>
        <fullName evidence="1">Xylose isomerase</fullName>
        <ecNumber evidence="1">5.3.1.5</ecNumber>
    </recommendedName>
</protein>
<accession>A6VLM8</accession>
<comment type="catalytic activity">
    <reaction evidence="1">
        <text>alpha-D-xylose = alpha-D-xylulofuranose</text>
        <dbReference type="Rhea" id="RHEA:22816"/>
        <dbReference type="ChEBI" id="CHEBI:28518"/>
        <dbReference type="ChEBI" id="CHEBI:188998"/>
        <dbReference type="EC" id="5.3.1.5"/>
    </reaction>
</comment>
<comment type="cofactor">
    <cofactor evidence="1">
        <name>Mg(2+)</name>
        <dbReference type="ChEBI" id="CHEBI:18420"/>
    </cofactor>
    <text evidence="1">Binds 2 magnesium ions per subunit.</text>
</comment>
<comment type="subunit">
    <text evidence="1">Homotetramer.</text>
</comment>
<comment type="subcellular location">
    <subcellularLocation>
        <location evidence="1">Cytoplasm</location>
    </subcellularLocation>
</comment>
<comment type="similarity">
    <text evidence="1">Belongs to the xylose isomerase family.</text>
</comment>
<dbReference type="EC" id="5.3.1.5" evidence="1"/>
<dbReference type="EMBL" id="CP000746">
    <property type="protein sequence ID" value="ABR73875.1"/>
    <property type="molecule type" value="Genomic_DNA"/>
</dbReference>
<dbReference type="RefSeq" id="WP_012072255.1">
    <property type="nucleotide sequence ID" value="NC_009655.1"/>
</dbReference>
<dbReference type="SMR" id="A6VLM8"/>
<dbReference type="STRING" id="339671.Asuc_0500"/>
<dbReference type="KEGG" id="asu:Asuc_0500"/>
<dbReference type="eggNOG" id="COG2115">
    <property type="taxonomic scope" value="Bacteria"/>
</dbReference>
<dbReference type="HOGENOM" id="CLU_037261_1_0_6"/>
<dbReference type="OrthoDB" id="9763981at2"/>
<dbReference type="Proteomes" id="UP000001114">
    <property type="component" value="Chromosome"/>
</dbReference>
<dbReference type="GO" id="GO:0005737">
    <property type="term" value="C:cytoplasm"/>
    <property type="evidence" value="ECO:0007669"/>
    <property type="project" value="UniProtKB-SubCell"/>
</dbReference>
<dbReference type="GO" id="GO:0000287">
    <property type="term" value="F:magnesium ion binding"/>
    <property type="evidence" value="ECO:0007669"/>
    <property type="project" value="UniProtKB-UniRule"/>
</dbReference>
<dbReference type="GO" id="GO:0009045">
    <property type="term" value="F:xylose isomerase activity"/>
    <property type="evidence" value="ECO:0007669"/>
    <property type="project" value="UniProtKB-UniRule"/>
</dbReference>
<dbReference type="GO" id="GO:0042732">
    <property type="term" value="P:D-xylose metabolic process"/>
    <property type="evidence" value="ECO:0007669"/>
    <property type="project" value="UniProtKB-UniRule"/>
</dbReference>
<dbReference type="FunFam" id="3.20.20.150:FF:000002">
    <property type="entry name" value="Xylose isomerase"/>
    <property type="match status" value="1"/>
</dbReference>
<dbReference type="Gene3D" id="3.20.20.150">
    <property type="entry name" value="Divalent-metal-dependent TIM barrel enzymes"/>
    <property type="match status" value="1"/>
</dbReference>
<dbReference type="HAMAP" id="MF_00455">
    <property type="entry name" value="Xylose_isom_A"/>
    <property type="match status" value="1"/>
</dbReference>
<dbReference type="InterPro" id="IPR036237">
    <property type="entry name" value="Xyl_isomerase-like_sf"/>
</dbReference>
<dbReference type="InterPro" id="IPR013452">
    <property type="entry name" value="Xylose_isom_bac"/>
</dbReference>
<dbReference type="InterPro" id="IPR001998">
    <property type="entry name" value="Xylose_isomerase"/>
</dbReference>
<dbReference type="NCBIfam" id="NF003998">
    <property type="entry name" value="PRK05474.1"/>
    <property type="match status" value="1"/>
</dbReference>
<dbReference type="NCBIfam" id="TIGR02630">
    <property type="entry name" value="xylose_isom_A"/>
    <property type="match status" value="1"/>
</dbReference>
<dbReference type="PANTHER" id="PTHR48408">
    <property type="match status" value="1"/>
</dbReference>
<dbReference type="PANTHER" id="PTHR48408:SF1">
    <property type="entry name" value="XYLOSE ISOMERASE"/>
    <property type="match status" value="1"/>
</dbReference>
<dbReference type="PRINTS" id="PR00688">
    <property type="entry name" value="XYLOSISMRASE"/>
</dbReference>
<dbReference type="SUPFAM" id="SSF51658">
    <property type="entry name" value="Xylose isomerase-like"/>
    <property type="match status" value="1"/>
</dbReference>
<dbReference type="PROSITE" id="PS51415">
    <property type="entry name" value="XYLOSE_ISOMERASE"/>
    <property type="match status" value="1"/>
</dbReference>
<evidence type="ECO:0000255" key="1">
    <source>
        <dbReference type="HAMAP-Rule" id="MF_00455"/>
    </source>
</evidence>
<gene>
    <name evidence="1" type="primary">xylA</name>
    <name type="ordered locus">Asuc_0500</name>
</gene>
<organism>
    <name type="scientific">Actinobacillus succinogenes (strain ATCC 55618 / DSM 22257 / CCUG 43843 / 130Z)</name>
    <dbReference type="NCBI Taxonomy" id="339671"/>
    <lineage>
        <taxon>Bacteria</taxon>
        <taxon>Pseudomonadati</taxon>
        <taxon>Pseudomonadota</taxon>
        <taxon>Gammaproteobacteria</taxon>
        <taxon>Pasteurellales</taxon>
        <taxon>Pasteurellaceae</taxon>
        <taxon>Actinobacillus</taxon>
    </lineage>
</organism>
<keyword id="KW-0119">Carbohydrate metabolism</keyword>
<keyword id="KW-0963">Cytoplasm</keyword>
<keyword id="KW-0413">Isomerase</keyword>
<keyword id="KW-0460">Magnesium</keyword>
<keyword id="KW-0479">Metal-binding</keyword>
<keyword id="KW-1185">Reference proteome</keyword>
<keyword id="KW-0859">Xylose metabolism</keyword>
<proteinExistence type="inferred from homology"/>
<name>XYLA_ACTSZ</name>
<reference key="1">
    <citation type="journal article" date="2010" name="BMC Genomics">
        <title>A genomic perspective on the potential of Actinobacillus succinogenes for industrial succinate production.</title>
        <authorList>
            <person name="McKinlay J.B."/>
            <person name="Laivenieks M."/>
            <person name="Schindler B.D."/>
            <person name="McKinlay A.A."/>
            <person name="Siddaramappa S."/>
            <person name="Challacombe J.F."/>
            <person name="Lowry S.R."/>
            <person name="Clum A."/>
            <person name="Lapidus A.L."/>
            <person name="Burkhart K.B."/>
            <person name="Harkins V."/>
            <person name="Vieille C."/>
        </authorList>
    </citation>
    <scope>NUCLEOTIDE SEQUENCE [LARGE SCALE GENOMIC DNA]</scope>
    <source>
        <strain>ATCC 55618 / DSM 22257 / CCUG 43843 / 130Z</strain>
    </source>
</reference>